<keyword id="KW-0028">Amino-acid biosynthesis</keyword>
<keyword id="KW-0963">Cytoplasm</keyword>
<keyword id="KW-0413">Isomerase</keyword>
<keyword id="KW-0457">Lysine biosynthesis</keyword>
<gene>
    <name evidence="1" type="primary">dapF</name>
    <name type="ordered locus">HSM_0400</name>
</gene>
<dbReference type="EC" id="5.1.1.7" evidence="1"/>
<dbReference type="EMBL" id="CP000947">
    <property type="protein sequence ID" value="ACA32042.1"/>
    <property type="molecule type" value="Genomic_DNA"/>
</dbReference>
<dbReference type="RefSeq" id="WP_012341248.1">
    <property type="nucleotide sequence ID" value="NC_010519.1"/>
</dbReference>
<dbReference type="SMR" id="B0UWU6"/>
<dbReference type="STRING" id="228400.HSM_0400"/>
<dbReference type="GeneID" id="31486680"/>
<dbReference type="KEGG" id="hsm:HSM_0400"/>
<dbReference type="HOGENOM" id="CLU_053306_1_1_6"/>
<dbReference type="UniPathway" id="UPA00034">
    <property type="reaction ID" value="UER00025"/>
</dbReference>
<dbReference type="GO" id="GO:0005829">
    <property type="term" value="C:cytosol"/>
    <property type="evidence" value="ECO:0007669"/>
    <property type="project" value="TreeGrafter"/>
</dbReference>
<dbReference type="GO" id="GO:0008837">
    <property type="term" value="F:diaminopimelate epimerase activity"/>
    <property type="evidence" value="ECO:0007669"/>
    <property type="project" value="UniProtKB-UniRule"/>
</dbReference>
<dbReference type="GO" id="GO:0009089">
    <property type="term" value="P:lysine biosynthetic process via diaminopimelate"/>
    <property type="evidence" value="ECO:0007669"/>
    <property type="project" value="UniProtKB-UniRule"/>
</dbReference>
<dbReference type="FunFam" id="3.10.310.10:FF:000001">
    <property type="entry name" value="Diaminopimelate epimerase"/>
    <property type="match status" value="1"/>
</dbReference>
<dbReference type="FunFam" id="3.10.310.10:FF:000002">
    <property type="entry name" value="Diaminopimelate epimerase"/>
    <property type="match status" value="1"/>
</dbReference>
<dbReference type="Gene3D" id="3.10.310.10">
    <property type="entry name" value="Diaminopimelate Epimerase, Chain A, domain 1"/>
    <property type="match status" value="2"/>
</dbReference>
<dbReference type="HAMAP" id="MF_00197">
    <property type="entry name" value="DAP_epimerase"/>
    <property type="match status" value="1"/>
</dbReference>
<dbReference type="InterPro" id="IPR018510">
    <property type="entry name" value="DAP_epimerase_AS"/>
</dbReference>
<dbReference type="InterPro" id="IPR001653">
    <property type="entry name" value="DAP_epimerase_DapF"/>
</dbReference>
<dbReference type="NCBIfam" id="TIGR00652">
    <property type="entry name" value="DapF"/>
    <property type="match status" value="1"/>
</dbReference>
<dbReference type="PANTHER" id="PTHR31689:SF0">
    <property type="entry name" value="DIAMINOPIMELATE EPIMERASE"/>
    <property type="match status" value="1"/>
</dbReference>
<dbReference type="PANTHER" id="PTHR31689">
    <property type="entry name" value="DIAMINOPIMELATE EPIMERASE, CHLOROPLASTIC"/>
    <property type="match status" value="1"/>
</dbReference>
<dbReference type="Pfam" id="PF01678">
    <property type="entry name" value="DAP_epimerase"/>
    <property type="match status" value="2"/>
</dbReference>
<dbReference type="SUPFAM" id="SSF54506">
    <property type="entry name" value="Diaminopimelate epimerase-like"/>
    <property type="match status" value="1"/>
</dbReference>
<dbReference type="PROSITE" id="PS01326">
    <property type="entry name" value="DAP_EPIMERASE"/>
    <property type="match status" value="1"/>
</dbReference>
<feature type="chain" id="PRO_1000077698" description="Diaminopimelate epimerase">
    <location>
        <begin position="1"/>
        <end position="274"/>
    </location>
</feature>
<feature type="active site" description="Proton donor" evidence="1">
    <location>
        <position position="73"/>
    </location>
</feature>
<feature type="active site" description="Proton acceptor" evidence="1">
    <location>
        <position position="217"/>
    </location>
</feature>
<feature type="binding site" evidence="1">
    <location>
        <position position="11"/>
    </location>
    <ligand>
        <name>substrate</name>
    </ligand>
</feature>
<feature type="binding site" evidence="1">
    <location>
        <position position="44"/>
    </location>
    <ligand>
        <name>substrate</name>
    </ligand>
</feature>
<feature type="binding site" evidence="1">
    <location>
        <position position="64"/>
    </location>
    <ligand>
        <name>substrate</name>
    </ligand>
</feature>
<feature type="binding site" evidence="1">
    <location>
        <begin position="74"/>
        <end position="75"/>
    </location>
    <ligand>
        <name>substrate</name>
    </ligand>
</feature>
<feature type="binding site" evidence="1">
    <location>
        <position position="157"/>
    </location>
    <ligand>
        <name>substrate</name>
    </ligand>
</feature>
<feature type="binding site" evidence="1">
    <location>
        <position position="190"/>
    </location>
    <ligand>
        <name>substrate</name>
    </ligand>
</feature>
<feature type="binding site" evidence="1">
    <location>
        <begin position="208"/>
        <end position="209"/>
    </location>
    <ligand>
        <name>substrate</name>
    </ligand>
</feature>
<feature type="binding site" evidence="1">
    <location>
        <begin position="218"/>
        <end position="219"/>
    </location>
    <ligand>
        <name>substrate</name>
    </ligand>
</feature>
<feature type="site" description="Could be important to modulate the pK values of the two catalytic cysteine residues" evidence="1">
    <location>
        <position position="159"/>
    </location>
</feature>
<feature type="site" description="Could be important to modulate the pK values of the two catalytic cysteine residues" evidence="1">
    <location>
        <position position="208"/>
    </location>
</feature>
<feature type="site" description="Important for dimerization" evidence="1">
    <location>
        <position position="268"/>
    </location>
</feature>
<sequence>MQFSKMHGLGNDFVVVDAVTQNIYFPTEVIKRLADRNRGIGFDQLLVVEPPYDPDLDFHYRIFNADGSEVSQCGNGARCFARFVVLKGLTNKKEIAVSTAKGKMMLCVKDDDMVCVNMGEPIWEPNKIPFNANKFEKNYIIRTDIQTLLCGVVSMGNPHCVTQVEDIQHANIEILGPLLESHERFPERVNAGFMQIINRNHIKLRVYERGAGETQACGSGACAAVAVGIMQGVLGSCVQVDLPGGRLMIEWQGKGHPLYMTGEATHIYDGVIRL</sequence>
<organism>
    <name type="scientific">Histophilus somni (strain 2336)</name>
    <name type="common">Haemophilus somnus</name>
    <dbReference type="NCBI Taxonomy" id="228400"/>
    <lineage>
        <taxon>Bacteria</taxon>
        <taxon>Pseudomonadati</taxon>
        <taxon>Pseudomonadota</taxon>
        <taxon>Gammaproteobacteria</taxon>
        <taxon>Pasteurellales</taxon>
        <taxon>Pasteurellaceae</taxon>
        <taxon>Histophilus</taxon>
    </lineage>
</organism>
<accession>B0UWU6</accession>
<name>DAPF_HISS2</name>
<protein>
    <recommendedName>
        <fullName evidence="1">Diaminopimelate epimerase</fullName>
        <shortName evidence="1">DAP epimerase</shortName>
        <ecNumber evidence="1">5.1.1.7</ecNumber>
    </recommendedName>
    <alternativeName>
        <fullName evidence="1">PLP-independent amino acid racemase</fullName>
    </alternativeName>
</protein>
<proteinExistence type="inferred from homology"/>
<reference key="1">
    <citation type="submission" date="2008-02" db="EMBL/GenBank/DDBJ databases">
        <title>Complete sequence of Haemophilus somnus 2336.</title>
        <authorList>
            <consortium name="US DOE Joint Genome Institute"/>
            <person name="Siddaramappa S."/>
            <person name="Duncan A.J."/>
            <person name="Challacombe J.F."/>
            <person name="Rainey D."/>
            <person name="Gillaspy A.F."/>
            <person name="Carson M."/>
            <person name="Gipson J."/>
            <person name="Gipson M."/>
            <person name="Bruce D."/>
            <person name="Detter J.C."/>
            <person name="Han C.S."/>
            <person name="Land M."/>
            <person name="Tapia R."/>
            <person name="Thompson L.S."/>
            <person name="Orvis J."/>
            <person name="Zaitshik J."/>
            <person name="Barnes G."/>
            <person name="Brettin T.S."/>
            <person name="Dyer D.W."/>
            <person name="Inzana T.J."/>
        </authorList>
    </citation>
    <scope>NUCLEOTIDE SEQUENCE [LARGE SCALE GENOMIC DNA]</scope>
    <source>
        <strain>2336</strain>
    </source>
</reference>
<evidence type="ECO:0000255" key="1">
    <source>
        <dbReference type="HAMAP-Rule" id="MF_00197"/>
    </source>
</evidence>
<comment type="function">
    <text evidence="1">Catalyzes the stereoinversion of LL-2,6-diaminopimelate (L,L-DAP) to meso-diaminopimelate (meso-DAP), a precursor of L-lysine and an essential component of the bacterial peptidoglycan.</text>
</comment>
<comment type="catalytic activity">
    <reaction evidence="1">
        <text>(2S,6S)-2,6-diaminopimelate = meso-2,6-diaminopimelate</text>
        <dbReference type="Rhea" id="RHEA:15393"/>
        <dbReference type="ChEBI" id="CHEBI:57609"/>
        <dbReference type="ChEBI" id="CHEBI:57791"/>
        <dbReference type="EC" id="5.1.1.7"/>
    </reaction>
</comment>
<comment type="pathway">
    <text evidence="1">Amino-acid biosynthesis; L-lysine biosynthesis via DAP pathway; DL-2,6-diaminopimelate from LL-2,6-diaminopimelate: step 1/1.</text>
</comment>
<comment type="subunit">
    <text evidence="1">Homodimer.</text>
</comment>
<comment type="subcellular location">
    <subcellularLocation>
        <location evidence="1">Cytoplasm</location>
    </subcellularLocation>
</comment>
<comment type="similarity">
    <text evidence="1">Belongs to the diaminopimelate epimerase family.</text>
</comment>